<reference key="1">
    <citation type="journal article" date="1995" name="Mol. Plant Microbe Interact.">
        <title>Molecular analysis of the Rhizobium meliloti mucR gene regulating the biosynthesis of the exopolysaccharides succinoglycan and galactoglucan.</title>
        <authorList>
            <person name="Keller M."/>
            <person name="Roxlau A."/>
            <person name="Weng W.M."/>
            <person name="Schmidt M."/>
            <person name="Quandt J."/>
            <person name="Niehaus K."/>
            <person name="Jording D."/>
            <person name="Arnold W."/>
            <person name="Puehler A."/>
        </authorList>
    </citation>
    <scope>NUCLEOTIDE SEQUENCE [GENOMIC DNA]</scope>
    <source>
        <strain>RCR2011 / SU47</strain>
    </source>
</reference>
<reference key="2">
    <citation type="journal article" date="2001" name="Proc. Natl. Acad. Sci. U.S.A.">
        <title>Analysis of the chromosome sequence of the legume symbiont Sinorhizobium meliloti strain 1021.</title>
        <authorList>
            <person name="Capela D."/>
            <person name="Barloy-Hubler F."/>
            <person name="Gouzy J."/>
            <person name="Bothe G."/>
            <person name="Ampe F."/>
            <person name="Batut J."/>
            <person name="Boistard P."/>
            <person name="Becker A."/>
            <person name="Boutry M."/>
            <person name="Cadieu E."/>
            <person name="Dreano S."/>
            <person name="Gloux S."/>
            <person name="Godrie T."/>
            <person name="Goffeau A."/>
            <person name="Kahn D."/>
            <person name="Kiss E."/>
            <person name="Lelaure V."/>
            <person name="Masuy D."/>
            <person name="Pohl T."/>
            <person name="Portetelle D."/>
            <person name="Puehler A."/>
            <person name="Purnelle B."/>
            <person name="Ramsperger U."/>
            <person name="Renard C."/>
            <person name="Thebault P."/>
            <person name="Vandenbol M."/>
            <person name="Weidner S."/>
            <person name="Galibert F."/>
        </authorList>
    </citation>
    <scope>NUCLEOTIDE SEQUENCE [LARGE SCALE GENOMIC DNA]</scope>
    <source>
        <strain>1021</strain>
    </source>
</reference>
<reference key="3">
    <citation type="journal article" date="2001" name="Science">
        <title>The composite genome of the legume symbiont Sinorhizobium meliloti.</title>
        <authorList>
            <person name="Galibert F."/>
            <person name="Finan T.M."/>
            <person name="Long S.R."/>
            <person name="Puehler A."/>
            <person name="Abola P."/>
            <person name="Ampe F."/>
            <person name="Barloy-Hubler F."/>
            <person name="Barnett M.J."/>
            <person name="Becker A."/>
            <person name="Boistard P."/>
            <person name="Bothe G."/>
            <person name="Boutry M."/>
            <person name="Bowser L."/>
            <person name="Buhrmester J."/>
            <person name="Cadieu E."/>
            <person name="Capela D."/>
            <person name="Chain P."/>
            <person name="Cowie A."/>
            <person name="Davis R.W."/>
            <person name="Dreano S."/>
            <person name="Federspiel N.A."/>
            <person name="Fisher R.F."/>
            <person name="Gloux S."/>
            <person name="Godrie T."/>
            <person name="Goffeau A."/>
            <person name="Golding B."/>
            <person name="Gouzy J."/>
            <person name="Gurjal M."/>
            <person name="Hernandez-Lucas I."/>
            <person name="Hong A."/>
            <person name="Huizar L."/>
            <person name="Hyman R.W."/>
            <person name="Jones T."/>
            <person name="Kahn D."/>
            <person name="Kahn M.L."/>
            <person name="Kalman S."/>
            <person name="Keating D.H."/>
            <person name="Kiss E."/>
            <person name="Komp C."/>
            <person name="Lelaure V."/>
            <person name="Masuy D."/>
            <person name="Palm C."/>
            <person name="Peck M.C."/>
            <person name="Pohl T.M."/>
            <person name="Portetelle D."/>
            <person name="Purnelle B."/>
            <person name="Ramsperger U."/>
            <person name="Surzycki R."/>
            <person name="Thebault P."/>
            <person name="Vandenbol M."/>
            <person name="Vorhoelter F.J."/>
            <person name="Weidner S."/>
            <person name="Wells D.H."/>
            <person name="Wong K."/>
            <person name="Yeh K.-C."/>
            <person name="Batut J."/>
        </authorList>
    </citation>
    <scope>NUCLEOTIDE SEQUENCE [LARGE SCALE GENOMIC DNA]</scope>
    <source>
        <strain>1021</strain>
    </source>
</reference>
<comment type="subcellular location">
    <subcellularLocation>
        <location evidence="3">Membrane</location>
        <topology evidence="3">Single-pass membrane protein</topology>
    </subcellularLocation>
</comment>
<dbReference type="EMBL" id="L37353">
    <property type="protein sequence ID" value="AAA74241.1"/>
    <property type="molecule type" value="Genomic_DNA"/>
</dbReference>
<dbReference type="EMBL" id="AL591688">
    <property type="protein sequence ID" value="CAC45573.1"/>
    <property type="molecule type" value="Genomic_DNA"/>
</dbReference>
<dbReference type="RefSeq" id="NP_385107.1">
    <property type="nucleotide sequence ID" value="NC_003047.1"/>
</dbReference>
<dbReference type="RefSeq" id="WP_003527381.1">
    <property type="nucleotide sequence ID" value="NC_003047.1"/>
</dbReference>
<dbReference type="SMR" id="Q52968"/>
<dbReference type="EnsemblBacteria" id="CAC45573">
    <property type="protein sequence ID" value="CAC45573"/>
    <property type="gene ID" value="SMc00456"/>
</dbReference>
<dbReference type="KEGG" id="sme:SMc00456"/>
<dbReference type="PATRIC" id="fig|266834.11.peg.2402"/>
<dbReference type="eggNOG" id="ENOG5032Z7R">
    <property type="taxonomic scope" value="Bacteria"/>
</dbReference>
<dbReference type="HOGENOM" id="CLU_128167_1_0_5"/>
<dbReference type="OrthoDB" id="7923950at2"/>
<dbReference type="Proteomes" id="UP000001976">
    <property type="component" value="Chromosome"/>
</dbReference>
<dbReference type="GO" id="GO:0016020">
    <property type="term" value="C:membrane"/>
    <property type="evidence" value="ECO:0007669"/>
    <property type="project" value="UniProtKB-SubCell"/>
</dbReference>
<dbReference type="InterPro" id="IPR035220">
    <property type="entry name" value="DUF5330"/>
</dbReference>
<dbReference type="Pfam" id="PF17264">
    <property type="entry name" value="DUF5330"/>
    <property type="match status" value="1"/>
</dbReference>
<protein>
    <recommendedName>
        <fullName>Uncharacterized protein R01001</fullName>
    </recommendedName>
</protein>
<gene>
    <name type="ordered locus">R01001</name>
    <name type="ORF">SMc00456</name>
</gene>
<organism>
    <name type="scientific">Rhizobium meliloti (strain 1021)</name>
    <name type="common">Ensifer meliloti</name>
    <name type="synonym">Sinorhizobium meliloti</name>
    <dbReference type="NCBI Taxonomy" id="266834"/>
    <lineage>
        <taxon>Bacteria</taxon>
        <taxon>Pseudomonadati</taxon>
        <taxon>Pseudomonadota</taxon>
        <taxon>Alphaproteobacteria</taxon>
        <taxon>Hyphomicrobiales</taxon>
        <taxon>Rhizobiaceae</taxon>
        <taxon>Sinorhizobium/Ensifer group</taxon>
        <taxon>Sinorhizobium</taxon>
    </lineage>
</organism>
<feature type="chain" id="PRO_0000160641" description="Uncharacterized protein R01001">
    <location>
        <begin position="1"/>
        <end position="145"/>
    </location>
</feature>
<feature type="transmembrane region" description="Helical" evidence="1">
    <location>
        <begin position="1"/>
        <end position="21"/>
    </location>
</feature>
<feature type="region of interest" description="Disordered" evidence="2">
    <location>
        <begin position="109"/>
        <end position="145"/>
    </location>
</feature>
<feature type="compositionally biased region" description="Basic and acidic residues" evidence="2">
    <location>
        <begin position="119"/>
        <end position="138"/>
    </location>
</feature>
<feature type="sequence conflict" description="In Ref. 1." evidence="3" ref="1">
    <original>AEPAFKRMPVPEHRLDPGPASGK</original>
    <variation>PNRPSSVCRFRNTASIPVRLPGSNSCR</variation>
    <location>
        <begin position="123"/>
        <end position="145"/>
    </location>
</feature>
<proteinExistence type="predicted"/>
<evidence type="ECO:0000255" key="1"/>
<evidence type="ECO:0000256" key="2">
    <source>
        <dbReference type="SAM" id="MobiDB-lite"/>
    </source>
</evidence>
<evidence type="ECO:0000305" key="3"/>
<accession>Q52968</accession>
<sequence>MWFLVKATFWFSLVLVLLPFLDPSSSEKLEHGPKMEIGGTFSAANEAIQYISAICVEKPDVCEKGAETFVALGHRAREGARIAYEFLNTQFAEGDAAAPDVKVMTGTVTPAESVPSAEATEKAEPAFKRMPVPEHRLDPGPASGK</sequence>
<keyword id="KW-0472">Membrane</keyword>
<keyword id="KW-1185">Reference proteome</keyword>
<keyword id="KW-0812">Transmembrane</keyword>
<keyword id="KW-1133">Transmembrane helix</keyword>
<name>Y1001_RHIME</name>